<comment type="function">
    <text evidence="1">NDH-1 shuttles electrons from NADH, via FMN and iron-sulfur (Fe-S) centers, to quinones in the respiratory chain. The immediate electron acceptor for the enzyme in this species is believed to be ubiquinone. Couples the redox reaction to proton translocation (for every two electrons transferred, four hydrogen ions are translocated across the cytoplasmic membrane), and thus conserves the redox energy in a proton gradient.</text>
</comment>
<comment type="catalytic activity">
    <reaction evidence="1">
        <text>a quinone + NADH + 5 H(+)(in) = a quinol + NAD(+) + 4 H(+)(out)</text>
        <dbReference type="Rhea" id="RHEA:57888"/>
        <dbReference type="ChEBI" id="CHEBI:15378"/>
        <dbReference type="ChEBI" id="CHEBI:24646"/>
        <dbReference type="ChEBI" id="CHEBI:57540"/>
        <dbReference type="ChEBI" id="CHEBI:57945"/>
        <dbReference type="ChEBI" id="CHEBI:132124"/>
    </reaction>
</comment>
<comment type="subunit">
    <text evidence="1">NDH-1 is composed of 13 different subunits. Subunits NuoB, CD, E, F, and G constitute the peripheral sector of the complex.</text>
</comment>
<comment type="subcellular location">
    <subcellularLocation>
        <location evidence="1">Cell membrane</location>
        <topology evidence="1">Peripheral membrane protein</topology>
        <orientation evidence="1">Cytoplasmic side</orientation>
    </subcellularLocation>
</comment>
<comment type="similarity">
    <text evidence="1">In the N-terminal section; belongs to the complex I 30 kDa subunit family.</text>
</comment>
<comment type="similarity">
    <text evidence="1">In the C-terminal section; belongs to the complex I 49 kDa subunit family.</text>
</comment>
<feature type="chain" id="PRO_1000166678" description="NADH-quinone oxidoreductase subunit C/D">
    <location>
        <begin position="1"/>
        <end position="600"/>
    </location>
</feature>
<feature type="region of interest" description="NADH dehydrogenase I subunit C" evidence="1">
    <location>
        <begin position="1"/>
        <end position="190"/>
    </location>
</feature>
<feature type="region of interest" description="NADH dehydrogenase I subunit D" evidence="1">
    <location>
        <begin position="214"/>
        <end position="600"/>
    </location>
</feature>
<reference key="1">
    <citation type="journal article" date="2009" name="Science">
        <title>The dynamics and time scale of ongoing genomic erosion in symbiotic bacteria.</title>
        <authorList>
            <person name="Moran N.A."/>
            <person name="McLaughlin H.J."/>
            <person name="Sorek R."/>
        </authorList>
    </citation>
    <scope>NUCLEOTIDE SEQUENCE [LARGE SCALE GENOMIC DNA]</scope>
    <source>
        <strain>Tuc7</strain>
    </source>
</reference>
<protein>
    <recommendedName>
        <fullName evidence="1">NADH-quinone oxidoreductase subunit C/D</fullName>
        <ecNumber evidence="1">7.1.1.-</ecNumber>
    </recommendedName>
    <alternativeName>
        <fullName evidence="1">NADH dehydrogenase I subunit C/D</fullName>
    </alternativeName>
    <alternativeName>
        <fullName evidence="1">NDH-1 subunit C/D</fullName>
    </alternativeName>
</protein>
<evidence type="ECO:0000255" key="1">
    <source>
        <dbReference type="HAMAP-Rule" id="MF_01359"/>
    </source>
</evidence>
<sequence length="600" mass="69577">MIDLMPKKNTFLLKKKYKEDSNNSVINDLFDFFGKEFCFHQITLTGFPIIWIDKTLLIEVGKFLYHLSQPYIMLYDLHGVDERIRLHREDLPKADFSVFYHLISIERNSDIMIKVPLLENDLILPTFTGLFPNANWYERETWDMFGIIFNNHPNLTRIIMPSTWKGHPLRKNYSARATEYEPFFLNEQKEDLEMEGLKFKPELWGMKRKNDNVEFMFLNLGPNHPSAHGAFRIVLQLDGENIVDCVPDIGYHHRGAEKMAERQSWHSYIPYTDRIEYLGGCVNELPYVLAVEKLANISVPEKAEVIRVMMSELFRINSHLLYISTFIQDVGCMTPVFFAFTDRQKIYDLIEAITGARMHPAWFRIGGVANDLPQGWNILLKEFLDWMPKRLKYYINTALKNSILIHRSKGIAEYNKKEALQWGVTGAGLRATGLNFDVRKWRPYSGYQNYTFEVPVGSGISDCYSRVMIKVEEIYQSLFILKQCLCNMPSGPFKSEDSLTTPPSKECVLQNIETMITHFLQVSWGPVIPENESFQMIEATKGINSYYLISDGGTMSYRTRIRTPSFPHLQQIPSVIRGSLISDLIVYLGSIDFVMSDVDR</sequence>
<organism>
    <name type="scientific">Buchnera aphidicola subsp. Acyrthosiphon pisum (strain Tuc7)</name>
    <dbReference type="NCBI Taxonomy" id="561501"/>
    <lineage>
        <taxon>Bacteria</taxon>
        <taxon>Pseudomonadati</taxon>
        <taxon>Pseudomonadota</taxon>
        <taxon>Gammaproteobacteria</taxon>
        <taxon>Enterobacterales</taxon>
        <taxon>Erwiniaceae</taxon>
        <taxon>Buchnera</taxon>
    </lineage>
</organism>
<name>NUOCD_BUCAT</name>
<dbReference type="EC" id="7.1.1.-" evidence="1"/>
<dbReference type="EMBL" id="CP001158">
    <property type="protein sequence ID" value="ACL29976.1"/>
    <property type="molecule type" value="Genomic_DNA"/>
</dbReference>
<dbReference type="RefSeq" id="WP_012619454.1">
    <property type="nucleotide sequence ID" value="NC_011834.1"/>
</dbReference>
<dbReference type="SMR" id="B8D761"/>
<dbReference type="KEGG" id="bau:BUAPTUC7_155"/>
<dbReference type="HOGENOM" id="CLU_015134_3_2_6"/>
<dbReference type="GO" id="GO:0030964">
    <property type="term" value="C:NADH dehydrogenase complex"/>
    <property type="evidence" value="ECO:0007669"/>
    <property type="project" value="InterPro"/>
</dbReference>
<dbReference type="GO" id="GO:0005886">
    <property type="term" value="C:plasma membrane"/>
    <property type="evidence" value="ECO:0007669"/>
    <property type="project" value="UniProtKB-SubCell"/>
</dbReference>
<dbReference type="GO" id="GO:0051287">
    <property type="term" value="F:NAD binding"/>
    <property type="evidence" value="ECO:0007669"/>
    <property type="project" value="InterPro"/>
</dbReference>
<dbReference type="GO" id="GO:0008137">
    <property type="term" value="F:NADH dehydrogenase (ubiquinone) activity"/>
    <property type="evidence" value="ECO:0007669"/>
    <property type="project" value="InterPro"/>
</dbReference>
<dbReference type="GO" id="GO:0050136">
    <property type="term" value="F:NADH:ubiquinone reductase (non-electrogenic) activity"/>
    <property type="evidence" value="ECO:0007669"/>
    <property type="project" value="UniProtKB-UniRule"/>
</dbReference>
<dbReference type="GO" id="GO:0048038">
    <property type="term" value="F:quinone binding"/>
    <property type="evidence" value="ECO:0007669"/>
    <property type="project" value="UniProtKB-KW"/>
</dbReference>
<dbReference type="FunFam" id="1.10.645.10:FF:000001">
    <property type="entry name" value="NADH-quinone oxidoreductase subunit C/D"/>
    <property type="match status" value="1"/>
</dbReference>
<dbReference type="Gene3D" id="1.10.645.10">
    <property type="entry name" value="Cytochrome-c3 Hydrogenase, chain B"/>
    <property type="match status" value="1"/>
</dbReference>
<dbReference type="Gene3D" id="3.30.460.80">
    <property type="entry name" value="NADH:ubiquinone oxidoreductase, 30kDa subunit"/>
    <property type="match status" value="1"/>
</dbReference>
<dbReference type="HAMAP" id="MF_01359">
    <property type="entry name" value="NDH1_NuoCD_1"/>
    <property type="match status" value="1"/>
</dbReference>
<dbReference type="HAMAP" id="MF_01358">
    <property type="entry name" value="NDH1_NuoD"/>
    <property type="match status" value="1"/>
</dbReference>
<dbReference type="InterPro" id="IPR010218">
    <property type="entry name" value="NADH_DH_suC"/>
</dbReference>
<dbReference type="InterPro" id="IPR023062">
    <property type="entry name" value="NADH_DH_suCD"/>
</dbReference>
<dbReference type="InterPro" id="IPR001135">
    <property type="entry name" value="NADH_Q_OxRdtase_suD"/>
</dbReference>
<dbReference type="InterPro" id="IPR037232">
    <property type="entry name" value="NADH_quin_OxRdtase_su_C/D-like"/>
</dbReference>
<dbReference type="InterPro" id="IPR001268">
    <property type="entry name" value="NADH_UbQ_OxRdtase_30kDa_su"/>
</dbReference>
<dbReference type="InterPro" id="IPR014029">
    <property type="entry name" value="NADH_UbQ_OxRdtase_49kDa_CS"/>
</dbReference>
<dbReference type="InterPro" id="IPR022885">
    <property type="entry name" value="NDH1_su_D/H"/>
</dbReference>
<dbReference type="InterPro" id="IPR029014">
    <property type="entry name" value="NiFe-Hase_large"/>
</dbReference>
<dbReference type="NCBIfam" id="TIGR01961">
    <property type="entry name" value="NuoC_fam"/>
    <property type="match status" value="1"/>
</dbReference>
<dbReference type="NCBIfam" id="TIGR01962">
    <property type="entry name" value="NuoD"/>
    <property type="match status" value="1"/>
</dbReference>
<dbReference type="NCBIfam" id="NF004739">
    <property type="entry name" value="PRK06075.1"/>
    <property type="match status" value="1"/>
</dbReference>
<dbReference type="NCBIfam" id="NF008728">
    <property type="entry name" value="PRK11742.1"/>
    <property type="match status" value="1"/>
</dbReference>
<dbReference type="PANTHER" id="PTHR11993:SF45">
    <property type="entry name" value="NADH-QUINONE OXIDOREDUCTASE SUBUNIT C_D"/>
    <property type="match status" value="1"/>
</dbReference>
<dbReference type="PANTHER" id="PTHR11993">
    <property type="entry name" value="NADH-UBIQUINONE OXIDOREDUCTASE 49 KDA SUBUNIT"/>
    <property type="match status" value="1"/>
</dbReference>
<dbReference type="Pfam" id="PF00329">
    <property type="entry name" value="Complex1_30kDa"/>
    <property type="match status" value="1"/>
</dbReference>
<dbReference type="Pfam" id="PF00346">
    <property type="entry name" value="Complex1_49kDa"/>
    <property type="match status" value="1"/>
</dbReference>
<dbReference type="SUPFAM" id="SSF56762">
    <property type="entry name" value="HydB/Nqo4-like"/>
    <property type="match status" value="1"/>
</dbReference>
<dbReference type="SUPFAM" id="SSF143243">
    <property type="entry name" value="Nqo5-like"/>
    <property type="match status" value="1"/>
</dbReference>
<dbReference type="PROSITE" id="PS00535">
    <property type="entry name" value="COMPLEX1_49K"/>
    <property type="match status" value="1"/>
</dbReference>
<gene>
    <name evidence="1" type="primary">nuoC</name>
    <name evidence="1" type="synonym">nuoCD</name>
    <name evidence="1" type="synonym">nuoD</name>
    <name type="ordered locus">BUAPTUC7_155</name>
</gene>
<keyword id="KW-1003">Cell membrane</keyword>
<keyword id="KW-0472">Membrane</keyword>
<keyword id="KW-0511">Multifunctional enzyme</keyword>
<keyword id="KW-0520">NAD</keyword>
<keyword id="KW-0874">Quinone</keyword>
<keyword id="KW-1278">Translocase</keyword>
<keyword id="KW-0813">Transport</keyword>
<keyword id="KW-0830">Ubiquinone</keyword>
<proteinExistence type="inferred from homology"/>
<accession>B8D761</accession>